<accession>P80746</accession>
<accession>Q0PDN6</accession>
<accession>Q9GK48</accession>
<accession>Q9MZD6</accession>
<comment type="function">
    <text evidence="1 2">The alpha-V (ITGAV) integrins are receptors for vitronectin, cytotactin, fibronectin, fibrinogen, laminin, matrix metalloproteinase-2, osteopontin, osteomodulin, prothrombin, thrombospondin, TGFB1 and vWF. They recognize the sequence R-G-D in a wide array of ligands. Alpha-V integrins may play a role in embryo implantation, angiogenesis and wound healing (By similarity). ITGAV:ITGB3 binds to fractalkine (CX3CL1) and may act as its coreceptor in CX3CR1-dependent fractalkine signaling. ITGAV:ITGB3 binds to NRG1 (via EGF domain) and this binding is essential for NRG1-ERBB signaling. ITGAV:ITGB3 binds to FGF1 and this binding is essential for FGF1 signaling. ITGAV:ITGB3 binds to FGF2 and this binding is essential for FGF2 signaling. ITGAV:ITGB3 binds to IGF1 and this binding is essential for IGF1 signaling. ITGAV:ITGB3 binds to IGF2 and this binding is essential for IGF2 signaling. ITGAV:ITGB3 binds to IL1B and this binding is essential for IL1B signaling. ITGAV:ITGB3 binds to PLA2G2A via a site (site 2) which is distinct from the classical ligand-binding site (site 1) and this induces integrin conformational changes and enhanced ligand binding to site 1. ITGAV:ITGB3 and ITGAV:ITGB6 act as receptors for fibrillin-1 (FBN1) and mediate R-G-D-dependent cell adhesion to FBN1 (By similarity). Integrin alpha-V/beta-6 or alpha-V/beta-8 (ITGAV:ITGB6 or ITGAV:ITGB8) mediates R-G-D-dependent release of transforming growth factor beta-1 (TGF-beta-1) from regulatory Latency-associated peptide (LAP), thereby playing a key role in TGF-beta-1 activation (By similarity). ITGAV:ITGB3 acts as a receptor for CD40LG (By similarity). ITGAV:ITGB3 acts as a receptor for IBSP and promotes cell adhesion and migration to IBSP (By similarity).</text>
</comment>
<comment type="subunit">
    <text evidence="1 2">Heterodimer of an alpha and a beta subunit. The alpha subunit is composed of a heavy and a light chain linked by a disulfide bond. Alpha-V (ITGAV) associates with either beta-1 (ITGB1), beta-3 (ITGB3), beta-5 (ITGB5), beta-6 (ITGB6) or beta-8 (ITGB8) (By similarity). Interacts with RAB25. Interacts with CIB1 (By similarity). Integrins ITGAV:ITGB3 and ITGAV:ITGB5 interact with FBLN5 (via N-terminus) (By similarity). ITGAV:ITGB3 and ITGAV:ITGB5 interact with CCN3 (By similarity). ITGAV:ITGB3 interacts with ADGRA2 (By similarity). ITGAV:ITGB3 interacts with FGF2; it is likely that FGF2 can simultaneously bind ITGAV:ITGB3 and FGF receptors (By similarity). ITGAV:ITGB3 interacts with SELP (via C-type lectin domain); the interaction mediates cell-cell interaction and adhesion (By similarity). ITGAV:ITGB3 is found in a ternary complex with CX3CR1 and CX3CL1. ITGAV:ITGB3 is found in a ternary complex with NRG1 and ERBB3. ITGAV:ITGB3 is found in a ternary complex with FGF1 and FGFR1. ITGAV:ITGB3 is found in a ternary complex with IGF1 and IGF1R (By similarity). ITGAV:ITGB3 interacts with IGF2 (By similarity). ITGAV:ITGB3 and ITGAV:ITGB6 interact with FBN1 (By similarity). ITGAV:ITGB3 interacts with CD9, CD81 and CD151 (via second extracellular domain) (By similarity). ITGAV:ITGB6 interacts with TGFB1 (By similarity). ITGAV:ITGB3 interacts with PTN. Forms a complex with PTPRZ1 and PTN that stimulates endothelial cell migration through ITGB3 'Tyr-773' phosphorylation (By similarity). Interacts with TM4SF19 (By similarity).</text>
</comment>
<comment type="subunit">
    <text evidence="6 7">(Microbial infection) Alpha-V/beta-6 and alpha-V/beta-3 bind to foot-and-mouth disease virus (FMDV) VP1 protein and acts as a receptor for this virus.</text>
</comment>
<comment type="subcellular location">
    <subcellularLocation>
        <location>Cell membrane</location>
        <topology>Single-pass type I membrane protein</topology>
    </subcellularLocation>
    <subcellularLocation>
        <location evidence="1">Cell junction</location>
        <location evidence="1">Focal adhesion</location>
    </subcellularLocation>
</comment>
<comment type="similarity">
    <text evidence="9">Belongs to the integrin alpha chain family.</text>
</comment>
<reference key="1">
    <citation type="journal article" date="2000" name="J. Virol.">
        <title>High-efficiency utilization of the bovine integrin alpha(v)beta(3) as a receptor for foot-and-mouth disease virus is dependent on the bovine beta(3) subunit.</title>
        <authorList>
            <person name="Neff S."/>
            <person name="Mason P.W."/>
            <person name="Baxt B."/>
        </authorList>
    </citation>
    <scope>NUCLEOTIDE SEQUENCE [MRNA]</scope>
    <scope>INTERACTION WITH FMDV CAPSID PROTEINS (MICROBIAL INFECTION)</scope>
    <source>
        <tissue>Lung</tissue>
    </source>
</reference>
<reference key="2">
    <citation type="submission" date="2006-07" db="EMBL/GenBank/DDBJ databases">
        <title>Molecular cloning and characteristics of bovine alpha V cDNA.</title>
        <authorList>
            <person name="Du J."/>
            <person name="Chang H."/>
            <person name="Cong G."/>
            <person name="Shao J."/>
            <person name="Lin T."/>
            <person name="Liu Z."/>
            <person name="Liu X."/>
            <person name="Cai X."/>
            <person name="Xie Q."/>
        </authorList>
    </citation>
    <scope>NUCLEOTIDE SEQUENCE [MRNA]</scope>
    <source>
        <tissue>Lung</tissue>
    </source>
</reference>
<reference key="3">
    <citation type="submission" date="2000-10" db="EMBL/GenBank/DDBJ databases">
        <title>Bovine alpha-V integrin subunit (fragment).</title>
        <authorList>
            <person name="Andersen M.H."/>
            <person name="Rasmussen J.T."/>
            <person name="Berglund L."/>
            <person name="Petersen T.E."/>
        </authorList>
    </citation>
    <scope>NUCLEOTIDE SEQUENCE [MRNA] OF 42-1048</scope>
    <source>
        <tissue>Mammary gland</tissue>
    </source>
</reference>
<reference key="4">
    <citation type="journal article" date="1997" name="Biochemistry">
        <title>Bovine PAS-6/7 binds alpha v beta 5 integrins and anionic phospholipids through two domains.</title>
        <authorList>
            <person name="Andersen M.H."/>
            <person name="Berglund L."/>
            <person name="Rasmussen J.T."/>
            <person name="Petersen T.E."/>
        </authorList>
    </citation>
    <scope>PROTEIN SEQUENCE OF 31-50 AND 891-910</scope>
    <source>
        <tissue>Mammary gland</tissue>
    </source>
</reference>
<reference key="5">
    <citation type="journal article" date="2003" name="J. Virol.">
        <title>Foot-and-mouth disease virus receptors: comparison of bovine alpha(V) integrin utilization by type A and O viruses.</title>
        <authorList>
            <person name="Duque H."/>
            <person name="Baxt B."/>
        </authorList>
    </citation>
    <scope>INTERACTION WITH HOST FMDV VP1 (MICROBIAL INFECTION)</scope>
</reference>
<organism>
    <name type="scientific">Bos taurus</name>
    <name type="common">Bovine</name>
    <dbReference type="NCBI Taxonomy" id="9913"/>
    <lineage>
        <taxon>Eukaryota</taxon>
        <taxon>Metazoa</taxon>
        <taxon>Chordata</taxon>
        <taxon>Craniata</taxon>
        <taxon>Vertebrata</taxon>
        <taxon>Euteleostomi</taxon>
        <taxon>Mammalia</taxon>
        <taxon>Eutheria</taxon>
        <taxon>Laurasiatheria</taxon>
        <taxon>Artiodactyla</taxon>
        <taxon>Ruminantia</taxon>
        <taxon>Pecora</taxon>
        <taxon>Bovidae</taxon>
        <taxon>Bovinae</taxon>
        <taxon>Bos</taxon>
    </lineage>
</organism>
<dbReference type="EMBL" id="AF239958">
    <property type="protein sequence ID" value="AAF44691.2"/>
    <property type="molecule type" value="mRNA"/>
</dbReference>
<dbReference type="EMBL" id="DQ871215">
    <property type="protein sequence ID" value="ABH07896.1"/>
    <property type="molecule type" value="mRNA"/>
</dbReference>
<dbReference type="EMBL" id="AF317199">
    <property type="protein sequence ID" value="AAG38595.1"/>
    <property type="molecule type" value="mRNA"/>
</dbReference>
<dbReference type="RefSeq" id="NP_776792.1">
    <property type="nucleotide sequence ID" value="NM_174367.1"/>
</dbReference>
<dbReference type="SMR" id="P80746"/>
<dbReference type="ComplexPortal" id="CPX-4126">
    <property type="entry name" value="Integrin alphav-beta3 complex"/>
</dbReference>
<dbReference type="FunCoup" id="P80746">
    <property type="interactions" value="1387"/>
</dbReference>
<dbReference type="IntAct" id="P80746">
    <property type="interactions" value="1"/>
</dbReference>
<dbReference type="STRING" id="9913.ENSBTAP00000060618"/>
<dbReference type="GlyCosmos" id="P80746">
    <property type="glycosylation" value="13 sites, No reported glycans"/>
</dbReference>
<dbReference type="GlyGen" id="P80746">
    <property type="glycosylation" value="13 sites"/>
</dbReference>
<dbReference type="PaxDb" id="9913-ENSBTAP00000026553"/>
<dbReference type="PeptideAtlas" id="P80746"/>
<dbReference type="GeneID" id="281875"/>
<dbReference type="KEGG" id="bta:281875"/>
<dbReference type="CTD" id="3685"/>
<dbReference type="eggNOG" id="KOG3637">
    <property type="taxonomic scope" value="Eukaryota"/>
</dbReference>
<dbReference type="InParanoid" id="P80746"/>
<dbReference type="OrthoDB" id="5317514at2759"/>
<dbReference type="Proteomes" id="UP000009136">
    <property type="component" value="Unplaced"/>
</dbReference>
<dbReference type="GO" id="GO:0009897">
    <property type="term" value="C:external side of plasma membrane"/>
    <property type="evidence" value="ECO:0000318"/>
    <property type="project" value="GO_Central"/>
</dbReference>
<dbReference type="GO" id="GO:0005925">
    <property type="term" value="C:focal adhesion"/>
    <property type="evidence" value="ECO:0000250"/>
    <property type="project" value="UniProtKB"/>
</dbReference>
<dbReference type="GO" id="GO:0034685">
    <property type="term" value="C:integrin alphav-beta6 complex"/>
    <property type="evidence" value="ECO:0000250"/>
    <property type="project" value="UniProtKB"/>
</dbReference>
<dbReference type="GO" id="GO:0034686">
    <property type="term" value="C:integrin alphav-beta8 complex"/>
    <property type="evidence" value="ECO:0000250"/>
    <property type="project" value="UniProtKB"/>
</dbReference>
<dbReference type="GO" id="GO:0008305">
    <property type="term" value="C:integrin complex"/>
    <property type="evidence" value="ECO:0000318"/>
    <property type="project" value="GO_Central"/>
</dbReference>
<dbReference type="GO" id="GO:0005178">
    <property type="term" value="F:integrin binding"/>
    <property type="evidence" value="ECO:0000318"/>
    <property type="project" value="GO_Central"/>
</dbReference>
<dbReference type="GO" id="GO:0046872">
    <property type="term" value="F:metal ion binding"/>
    <property type="evidence" value="ECO:0007669"/>
    <property type="project" value="UniProtKB-KW"/>
</dbReference>
<dbReference type="GO" id="GO:0001618">
    <property type="term" value="F:virus receptor activity"/>
    <property type="evidence" value="ECO:0007669"/>
    <property type="project" value="UniProtKB-KW"/>
</dbReference>
<dbReference type="GO" id="GO:0001525">
    <property type="term" value="P:angiogenesis"/>
    <property type="evidence" value="ECO:0000318"/>
    <property type="project" value="GO_Central"/>
</dbReference>
<dbReference type="GO" id="GO:0001568">
    <property type="term" value="P:blood vessel development"/>
    <property type="evidence" value="ECO:0000250"/>
    <property type="project" value="AgBase"/>
</dbReference>
<dbReference type="GO" id="GO:0033627">
    <property type="term" value="P:cell adhesion mediated by integrin"/>
    <property type="evidence" value="ECO:0000250"/>
    <property type="project" value="UniProtKB"/>
</dbReference>
<dbReference type="GO" id="GO:0098609">
    <property type="term" value="P:cell-cell adhesion"/>
    <property type="evidence" value="ECO:0000318"/>
    <property type="project" value="GO_Central"/>
</dbReference>
<dbReference type="GO" id="GO:0007229">
    <property type="term" value="P:integrin-mediated signaling pathway"/>
    <property type="evidence" value="ECO:0000318"/>
    <property type="project" value="GO_Central"/>
</dbReference>
<dbReference type="FunFam" id="2.130.10.130:FF:000003">
    <property type="entry name" value="Integrin alpha V"/>
    <property type="match status" value="1"/>
</dbReference>
<dbReference type="FunFam" id="2.60.40.1510:FF:000001">
    <property type="entry name" value="Integrin alpha V"/>
    <property type="match status" value="1"/>
</dbReference>
<dbReference type="FunFam" id="2.60.40.1530:FF:000002">
    <property type="entry name" value="integrin alpha-V isoform X2"/>
    <property type="match status" value="1"/>
</dbReference>
<dbReference type="FunFam" id="1.20.5.930:FF:000001">
    <property type="entry name" value="Integrin subunit alpha V"/>
    <property type="match status" value="1"/>
</dbReference>
<dbReference type="FunFam" id="2.60.40.1460:FF:000001">
    <property type="entry name" value="Integrin, alpha V"/>
    <property type="match status" value="1"/>
</dbReference>
<dbReference type="Gene3D" id="1.20.5.930">
    <property type="entry name" value="Bicelle-embedded integrin alpha(iib) transmembrane segment"/>
    <property type="match status" value="1"/>
</dbReference>
<dbReference type="Gene3D" id="2.130.10.130">
    <property type="entry name" value="Integrin alpha, N-terminal"/>
    <property type="match status" value="1"/>
</dbReference>
<dbReference type="Gene3D" id="2.60.40.1460">
    <property type="entry name" value="Integrin domains. Chain A, domain 2"/>
    <property type="match status" value="1"/>
</dbReference>
<dbReference type="Gene3D" id="2.60.40.1510">
    <property type="entry name" value="ntegrin, alpha v. Chain A, domain 3"/>
    <property type="match status" value="1"/>
</dbReference>
<dbReference type="Gene3D" id="2.60.40.1530">
    <property type="entry name" value="ntegrin, alpha v. Chain A, domain 4"/>
    <property type="match status" value="1"/>
</dbReference>
<dbReference type="InterPro" id="IPR013517">
    <property type="entry name" value="FG-GAP"/>
</dbReference>
<dbReference type="InterPro" id="IPR013519">
    <property type="entry name" value="Int_alpha_beta-p"/>
</dbReference>
<dbReference type="InterPro" id="IPR000413">
    <property type="entry name" value="Integrin_alpha"/>
</dbReference>
<dbReference type="InterPro" id="IPR018184">
    <property type="entry name" value="Integrin_alpha_C_CS"/>
</dbReference>
<dbReference type="InterPro" id="IPR013649">
    <property type="entry name" value="Integrin_alpha_Ig-like_1"/>
</dbReference>
<dbReference type="InterPro" id="IPR048285">
    <property type="entry name" value="Integrin_alpha_Ig-like_2"/>
</dbReference>
<dbReference type="InterPro" id="IPR048286">
    <property type="entry name" value="Integrin_alpha_Ig-like_3"/>
</dbReference>
<dbReference type="InterPro" id="IPR028994">
    <property type="entry name" value="Integrin_alpha_N"/>
</dbReference>
<dbReference type="InterPro" id="IPR032695">
    <property type="entry name" value="Integrin_dom_sf"/>
</dbReference>
<dbReference type="PANTHER" id="PTHR23220">
    <property type="entry name" value="INTEGRIN ALPHA"/>
    <property type="match status" value="1"/>
</dbReference>
<dbReference type="PANTHER" id="PTHR23220:SF4">
    <property type="entry name" value="INTEGRIN ALPHA-V"/>
    <property type="match status" value="1"/>
</dbReference>
<dbReference type="Pfam" id="PF01839">
    <property type="entry name" value="FG-GAP"/>
    <property type="match status" value="3"/>
</dbReference>
<dbReference type="Pfam" id="PF08441">
    <property type="entry name" value="Integrin_A_Ig_1"/>
    <property type="match status" value="1"/>
</dbReference>
<dbReference type="Pfam" id="PF20805">
    <property type="entry name" value="Integrin_A_Ig_2"/>
    <property type="match status" value="1"/>
</dbReference>
<dbReference type="Pfam" id="PF20806">
    <property type="entry name" value="Integrin_A_Ig_3"/>
    <property type="match status" value="1"/>
</dbReference>
<dbReference type="Pfam" id="PF00357">
    <property type="entry name" value="Integrin_alpha"/>
    <property type="match status" value="1"/>
</dbReference>
<dbReference type="PRINTS" id="PR01185">
    <property type="entry name" value="INTEGRINA"/>
</dbReference>
<dbReference type="SMART" id="SM00191">
    <property type="entry name" value="Int_alpha"/>
    <property type="match status" value="5"/>
</dbReference>
<dbReference type="SUPFAM" id="SSF69318">
    <property type="entry name" value="Integrin alpha N-terminal domain"/>
    <property type="match status" value="1"/>
</dbReference>
<dbReference type="SUPFAM" id="SSF69179">
    <property type="entry name" value="Integrin domains"/>
    <property type="match status" value="3"/>
</dbReference>
<dbReference type="PROSITE" id="PS51470">
    <property type="entry name" value="FG_GAP"/>
    <property type="match status" value="7"/>
</dbReference>
<dbReference type="PROSITE" id="PS00242">
    <property type="entry name" value="INTEGRIN_ALPHA"/>
    <property type="match status" value="1"/>
</dbReference>
<evidence type="ECO:0000250" key="1">
    <source>
        <dbReference type="UniProtKB" id="P06756"/>
    </source>
</evidence>
<evidence type="ECO:0000250" key="2">
    <source>
        <dbReference type="UniProtKB" id="P43406"/>
    </source>
</evidence>
<evidence type="ECO:0000255" key="3"/>
<evidence type="ECO:0000255" key="4">
    <source>
        <dbReference type="PROSITE-ProRule" id="PRU00803"/>
    </source>
</evidence>
<evidence type="ECO:0000256" key="5">
    <source>
        <dbReference type="SAM" id="MobiDB-lite"/>
    </source>
</evidence>
<evidence type="ECO:0000269" key="6">
    <source>
    </source>
</evidence>
<evidence type="ECO:0000269" key="7">
    <source>
    </source>
</evidence>
<evidence type="ECO:0000269" key="8">
    <source>
    </source>
</evidence>
<evidence type="ECO:0000305" key="9"/>
<gene>
    <name type="primary">ITGAV</name>
</gene>
<feature type="signal peptide" evidence="8">
    <location>
        <begin position="1"/>
        <end position="30"/>
    </location>
</feature>
<feature type="chain" id="PRO_0000016298" description="Integrin alpha-V">
    <location>
        <begin position="31"/>
        <end position="1048"/>
    </location>
</feature>
<feature type="chain" id="PRO_0000016299" description="Integrin alpha-V heavy chain">
    <location>
        <begin position="31"/>
        <end position="889"/>
    </location>
</feature>
<feature type="chain" id="PRO_0000016300" description="Integrin alpha-V light chain">
    <location>
        <begin position="891"/>
        <end position="1048"/>
    </location>
</feature>
<feature type="topological domain" description="Extracellular" evidence="3">
    <location>
        <begin position="31"/>
        <end position="992"/>
    </location>
</feature>
<feature type="transmembrane region" description="Helical" evidence="3">
    <location>
        <begin position="993"/>
        <end position="1016"/>
    </location>
</feature>
<feature type="topological domain" description="Cytoplasmic" evidence="3">
    <location>
        <begin position="1017"/>
        <end position="1048"/>
    </location>
</feature>
<feature type="repeat" description="FG-GAP 1" evidence="4">
    <location>
        <begin position="32"/>
        <end position="98"/>
    </location>
</feature>
<feature type="repeat" description="FG-GAP 2" evidence="4">
    <location>
        <begin position="109"/>
        <end position="170"/>
    </location>
</feature>
<feature type="repeat" description="FG-GAP 3" evidence="4">
    <location>
        <begin position="173"/>
        <end position="225"/>
    </location>
</feature>
<feature type="repeat" description="FG-GAP 4" evidence="4">
    <location>
        <begin position="237"/>
        <end position="291"/>
    </location>
</feature>
<feature type="repeat" description="FG-GAP 5" evidence="4">
    <location>
        <begin position="292"/>
        <end position="357"/>
    </location>
</feature>
<feature type="repeat" description="FG-GAP 6" evidence="4">
    <location>
        <begin position="358"/>
        <end position="415"/>
    </location>
</feature>
<feature type="repeat" description="FG-GAP 7" evidence="4">
    <location>
        <begin position="419"/>
        <end position="482"/>
    </location>
</feature>
<feature type="region of interest" description="Disordered" evidence="5">
    <location>
        <begin position="1027"/>
        <end position="1048"/>
    </location>
</feature>
<feature type="short sequence motif" description="GFFKR motif">
    <location>
        <begin position="1019"/>
        <end position="1023"/>
    </location>
</feature>
<feature type="compositionally biased region" description="Basic and acidic residues" evidence="5">
    <location>
        <begin position="1027"/>
        <end position="1042"/>
    </location>
</feature>
<feature type="binding site" evidence="1">
    <location>
        <position position="260"/>
    </location>
    <ligand>
        <name>Ca(2+)</name>
        <dbReference type="ChEBI" id="CHEBI:29108"/>
        <label>1</label>
    </ligand>
</feature>
<feature type="binding site" evidence="1">
    <location>
        <position position="262"/>
    </location>
    <ligand>
        <name>Ca(2+)</name>
        <dbReference type="ChEBI" id="CHEBI:29108"/>
        <label>1</label>
    </ligand>
</feature>
<feature type="binding site" evidence="1">
    <location>
        <position position="264"/>
    </location>
    <ligand>
        <name>Ca(2+)</name>
        <dbReference type="ChEBI" id="CHEBI:29108"/>
        <label>1</label>
    </ligand>
</feature>
<feature type="binding site" evidence="1">
    <location>
        <position position="266"/>
    </location>
    <ligand>
        <name>Ca(2+)</name>
        <dbReference type="ChEBI" id="CHEBI:29108"/>
        <label>1</label>
    </ligand>
</feature>
<feature type="binding site" evidence="1">
    <location>
        <position position="268"/>
    </location>
    <ligand>
        <name>Ca(2+)</name>
        <dbReference type="ChEBI" id="CHEBI:29108"/>
        <label>1</label>
    </ligand>
</feature>
<feature type="binding site" evidence="1">
    <location>
        <position position="314"/>
    </location>
    <ligand>
        <name>Ca(2+)</name>
        <dbReference type="ChEBI" id="CHEBI:29108"/>
        <label>2</label>
    </ligand>
</feature>
<feature type="binding site" evidence="1">
    <location>
        <position position="316"/>
    </location>
    <ligand>
        <name>Ca(2+)</name>
        <dbReference type="ChEBI" id="CHEBI:29108"/>
        <label>2</label>
    </ligand>
</feature>
<feature type="binding site" evidence="1">
    <location>
        <position position="318"/>
    </location>
    <ligand>
        <name>Ca(2+)</name>
        <dbReference type="ChEBI" id="CHEBI:29108"/>
        <label>2</label>
    </ligand>
</feature>
<feature type="binding site" evidence="1">
    <location>
        <position position="320"/>
    </location>
    <ligand>
        <name>Ca(2+)</name>
        <dbReference type="ChEBI" id="CHEBI:29108"/>
        <label>2</label>
    </ligand>
</feature>
<feature type="binding site" evidence="1">
    <location>
        <position position="322"/>
    </location>
    <ligand>
        <name>Ca(2+)</name>
        <dbReference type="ChEBI" id="CHEBI:29108"/>
        <label>2</label>
    </ligand>
</feature>
<feature type="binding site" evidence="1">
    <location>
        <position position="379"/>
    </location>
    <ligand>
        <name>Ca(2+)</name>
        <dbReference type="ChEBI" id="CHEBI:29108"/>
        <label>3</label>
    </ligand>
</feature>
<feature type="binding site" evidence="1">
    <location>
        <position position="381"/>
    </location>
    <ligand>
        <name>Ca(2+)</name>
        <dbReference type="ChEBI" id="CHEBI:29108"/>
        <label>3</label>
    </ligand>
</feature>
<feature type="binding site" evidence="1">
    <location>
        <position position="383"/>
    </location>
    <ligand>
        <name>Ca(2+)</name>
        <dbReference type="ChEBI" id="CHEBI:29108"/>
        <label>3</label>
    </ligand>
</feature>
<feature type="binding site" evidence="1">
    <location>
        <position position="385"/>
    </location>
    <ligand>
        <name>Ca(2+)</name>
        <dbReference type="ChEBI" id="CHEBI:29108"/>
        <label>3</label>
    </ligand>
</feature>
<feature type="binding site" evidence="1">
    <location>
        <position position="387"/>
    </location>
    <ligand>
        <name>Ca(2+)</name>
        <dbReference type="ChEBI" id="CHEBI:29108"/>
        <label>3</label>
    </ligand>
</feature>
<feature type="binding site" evidence="1">
    <location>
        <position position="443"/>
    </location>
    <ligand>
        <name>Ca(2+)</name>
        <dbReference type="ChEBI" id="CHEBI:29108"/>
        <label>4</label>
    </ligand>
</feature>
<feature type="binding site" evidence="1">
    <location>
        <position position="445"/>
    </location>
    <ligand>
        <name>Ca(2+)</name>
        <dbReference type="ChEBI" id="CHEBI:29108"/>
        <label>4</label>
    </ligand>
</feature>
<feature type="binding site" evidence="1">
    <location>
        <position position="447"/>
    </location>
    <ligand>
        <name>Ca(2+)</name>
        <dbReference type="ChEBI" id="CHEBI:29108"/>
        <label>4</label>
    </ligand>
</feature>
<feature type="binding site" evidence="1">
    <location>
        <position position="449"/>
    </location>
    <ligand>
        <name>Ca(2+)</name>
        <dbReference type="ChEBI" id="CHEBI:29108"/>
        <label>4</label>
    </ligand>
</feature>
<feature type="binding site" evidence="1">
    <location>
        <position position="451"/>
    </location>
    <ligand>
        <name>Ca(2+)</name>
        <dbReference type="ChEBI" id="CHEBI:29108"/>
        <label>4</label>
    </ligand>
</feature>
<feature type="glycosylation site" description="N-linked (GlcNAc...) asparagine" evidence="3">
    <location>
        <position position="74"/>
    </location>
</feature>
<feature type="glycosylation site" description="N-linked (GlcNAc...) asparagine" evidence="3">
    <location>
        <position position="290"/>
    </location>
</feature>
<feature type="glycosylation site" description="N-linked (GlcNAc...) asparagine" evidence="3">
    <location>
        <position position="296"/>
    </location>
</feature>
<feature type="glycosylation site" description="N-linked (GlcNAc...) asparagine" evidence="3">
    <location>
        <position position="488"/>
    </location>
</feature>
<feature type="glycosylation site" description="N-linked (GlcNAc...) asparagine" evidence="3">
    <location>
        <position position="554"/>
    </location>
</feature>
<feature type="glycosylation site" description="N-linked (GlcNAc...) asparagine" evidence="3">
    <location>
        <position position="615"/>
    </location>
</feature>
<feature type="glycosylation site" description="N-linked (GlcNAc...) asparagine" evidence="3">
    <location>
        <position position="704"/>
    </location>
</feature>
<feature type="glycosylation site" description="N-linked (GlcNAc...) asparagine" evidence="3">
    <location>
        <position position="835"/>
    </location>
</feature>
<feature type="glycosylation site" description="N-linked (GlcNAc...) asparagine" evidence="3">
    <location>
        <position position="851"/>
    </location>
</feature>
<feature type="glycosylation site" description="N-linked (GlcNAc...) asparagine" evidence="3">
    <location>
        <position position="874"/>
    </location>
</feature>
<feature type="glycosylation site" description="N-linked (GlcNAc...) asparagine" evidence="3">
    <location>
        <position position="945"/>
    </location>
</feature>
<feature type="glycosylation site" description="N-linked (GlcNAc...) asparagine" evidence="3">
    <location>
        <position position="973"/>
    </location>
</feature>
<feature type="glycosylation site" description="N-linked (GlcNAc...) asparagine" evidence="3">
    <location>
        <position position="980"/>
    </location>
</feature>
<feature type="disulfide bond" evidence="1">
    <location>
        <begin position="89"/>
        <end position="97"/>
    </location>
</feature>
<feature type="disulfide bond" evidence="1">
    <location>
        <begin position="138"/>
        <end position="158"/>
    </location>
</feature>
<feature type="disulfide bond" evidence="1">
    <location>
        <begin position="172"/>
        <end position="185"/>
    </location>
</feature>
<feature type="disulfide bond" evidence="1">
    <location>
        <begin position="491"/>
        <end position="502"/>
    </location>
</feature>
<feature type="disulfide bond" evidence="1">
    <location>
        <begin position="508"/>
        <end position="565"/>
    </location>
</feature>
<feature type="disulfide bond" evidence="1">
    <location>
        <begin position="626"/>
        <end position="632"/>
    </location>
</feature>
<feature type="disulfide bond" evidence="1">
    <location>
        <begin position="698"/>
        <end position="711"/>
    </location>
</feature>
<feature type="disulfide bond" description="Interchain (between heavy and light chains)" evidence="1">
    <location>
        <begin position="852"/>
        <end position="914"/>
    </location>
</feature>
<feature type="disulfide bond" evidence="1">
    <location>
        <begin position="904"/>
        <end position="909"/>
    </location>
</feature>
<feature type="sequence conflict" description="In Ref. 2; ABH07896." evidence="9" ref="2">
    <original>G</original>
    <variation>R</variation>
    <location>
        <position position="12"/>
    </location>
</feature>
<feature type="sequence conflict" description="In Ref. 2; ABH07896." evidence="9" ref="2">
    <original>GLP</original>
    <variation>RLL</variation>
    <location>
        <begin position="15"/>
        <end position="17"/>
    </location>
</feature>
<feature type="sequence conflict" description="In Ref. 2; ABH07896." evidence="9" ref="2">
    <original>SGL</original>
    <variation>PGI</variation>
    <location>
        <begin position="21"/>
        <end position="23"/>
    </location>
</feature>
<feature type="sequence conflict" description="In Ref. 2; ABH07896." evidence="9" ref="2">
    <original>R</original>
    <variation>G</variation>
    <location>
        <position position="29"/>
    </location>
</feature>
<feature type="sequence conflict" description="In Ref. 1; AAF44691." evidence="9" ref="1">
    <location>
        <position position="63"/>
    </location>
</feature>
<feature type="sequence conflict" description="In Ref. 3; AAG38595." evidence="9" ref="3">
    <original>R</original>
    <variation>G</variation>
    <location>
        <position position="152"/>
    </location>
</feature>
<feature type="sequence conflict" description="In Ref. 2; ABH07896." evidence="9" ref="2">
    <original>F</original>
    <variation>S</variation>
    <location>
        <position position="189"/>
    </location>
</feature>
<feature type="sequence conflict" description="In Ref. 2; ABH07896." evidence="9" ref="2">
    <original>T</original>
    <variation>I</variation>
    <location>
        <position position="242"/>
    </location>
</feature>
<feature type="sequence conflict" description="In Ref. 1; AAF44691." evidence="9" ref="1">
    <original>G</original>
    <variation>R</variation>
    <location>
        <position position="354"/>
    </location>
</feature>
<feature type="sequence conflict" description="In Ref. 1; AAF44691." evidence="9" ref="1">
    <original>A</original>
    <variation>T</variation>
    <location>
        <position position="415"/>
    </location>
</feature>
<feature type="sequence conflict" description="In Ref. 1; AAF44691." evidence="9" ref="1">
    <original>H</original>
    <variation>R</variation>
    <location>
        <position position="621"/>
    </location>
</feature>
<feature type="sequence conflict" description="In Ref. 1; AAF44691." evidence="9" ref="1">
    <original>D</original>
    <variation>G</variation>
    <location>
        <position position="629"/>
    </location>
</feature>
<feature type="sequence conflict" description="In Ref. 3; AAG38595." evidence="9" ref="3">
    <original>P</original>
    <variation>R</variation>
    <location>
        <position position="860"/>
    </location>
</feature>
<feature type="sequence conflict" description="In Ref. 3; AAG38595." evidence="9" ref="3">
    <original>T</original>
    <variation>A</variation>
    <location>
        <position position="870"/>
    </location>
</feature>
<feature type="sequence conflict" description="In Ref. 1; AAF44691." evidence="9" ref="1">
    <original>K</original>
    <variation>R</variation>
    <location>
        <position position="873"/>
    </location>
</feature>
<feature type="sequence conflict" description="In Ref. 4; AA sequence." evidence="9" ref="4">
    <original>L</original>
    <variation>V</variation>
    <location>
        <position position="894"/>
    </location>
</feature>
<feature type="sequence conflict" description="In Ref. 2; ABH07896." evidence="9" ref="2">
    <original>V</original>
    <variation>I</variation>
    <location>
        <position position="977"/>
    </location>
</feature>
<keyword id="KW-0106">Calcium</keyword>
<keyword id="KW-0130">Cell adhesion</keyword>
<keyword id="KW-0965">Cell junction</keyword>
<keyword id="KW-1003">Cell membrane</keyword>
<keyword id="KW-0165">Cleavage on pair of basic residues</keyword>
<keyword id="KW-0903">Direct protein sequencing</keyword>
<keyword id="KW-1015">Disulfide bond</keyword>
<keyword id="KW-0325">Glycoprotein</keyword>
<keyword id="KW-1183">Host cell receptor for virus entry</keyword>
<keyword id="KW-0945">Host-virus interaction</keyword>
<keyword id="KW-0401">Integrin</keyword>
<keyword id="KW-0472">Membrane</keyword>
<keyword id="KW-0479">Metal-binding</keyword>
<keyword id="KW-0675">Receptor</keyword>
<keyword id="KW-1185">Reference proteome</keyword>
<keyword id="KW-0677">Repeat</keyword>
<keyword id="KW-0732">Signal</keyword>
<keyword id="KW-0812">Transmembrane</keyword>
<keyword id="KW-1133">Transmembrane helix</keyword>
<name>ITAV_BOVIN</name>
<proteinExistence type="evidence at protein level"/>
<protein>
    <recommendedName>
        <fullName>Integrin alpha-V</fullName>
    </recommendedName>
    <alternativeName>
        <fullName>Vitronectin receptor subunit alpha</fullName>
    </alternativeName>
    <cdAntigenName>CD51</cdAntigenName>
    <component>
        <recommendedName>
            <fullName>Integrin alpha-V heavy chain</fullName>
        </recommendedName>
    </component>
    <component>
        <recommendedName>
            <fullName>Integrin alpha-V light chain</fullName>
        </recommendedName>
    </component>
</protein>
<sequence>MAFPPRRRLRLGPRGLPLLLSGLLLPLCRAFNLDVESPAEYSGPEGSYFGFAVDFFVPSASSRMFLLVGAPKANTTQPGIVEGGQVLKCDWSSHRRCQPIEFDATGNRDYAKDDPLEFKSHQWFGASVRSKQDKILACAPLYHWRTEMKQEREPVGTCFLQDGTKTVEYAPCRSKNIDADGQGFCQGGFSIDFTKADRVLLGGPGSFYWQGQLISDQVAEIVSKYDPKVYSIKYNNQLATRTAQAIFDDSYLGYSVAVGDFNGDGIDDFVSGVPRAARTLGMVYIYDGKNMSSLHNFTGEQMAAYFGFSVAATDINGDDYADVFIGAPLFMDRGSDGKLQEVGQVSVSLQKASGDFQTIKLNGFEVFARFGSAIAPLGDLDQDGFNDIAIAAPYGGEDKKGIVYIFNGRPTGLNAVPSQILEGKWAARSMPPSFGYSMKGATDIDKNGYPDLIVGAFGVDRAVLYRARPVITVNAGLEVYPSILNQENKTCPLPGTDLKVSCFNVRFCLKADGKGALPTKLDFQVELLLDKLKQKGAIRRALFLHNRSPGHSKNMTISRGGQMQCEELIAYLRDESEFRDKLTPITIFMEYWLDYRTAADATGLQPILNQFTPANVSRQAHILLDCGEDNVCKPKLEVSVDSDQKKIYIGDDNPLTLIVKAQNQGEGAYEAELIVSIPLQADFIGVVRNSEALARLSCAFKTENQTRQVVCDLGNPMKAGTQLLAGLRFSVHQQSEMDTSVKFDLQIQSSNLFDKVSPVVSYKVDLAVLAAVEIRGVSSPDHIFLPIPNWKYKENPETEEDVGPVVQHIYELRNNGPSSFSKAMLHLQWPYKYNNNTLLYILQYDIDGPMNCTSDMEINPLRIKISNSQTSEKNDTVGGQGDRNHLITKRDLTLNEGDVHTLGCGIAECLKIVCQVGRLDRGKSAILYVRSLLWTETFMNKENQNHSYSLKSSASFNVIEFPYKNLPIEDIFNSTLVTTNVTWGIQPAPMPVPVWVIILAVLAGLLLLAVLVFVMYRMGFFKRVRPPQEEQEREQLQPHENGEGNSET</sequence>